<accession>P27010</accession>
<protein>
    <recommendedName>
        <fullName>S-crystallin 2</fullName>
    </recommendedName>
    <alternativeName>
        <fullName>OL2</fullName>
    </alternativeName>
</protein>
<proteinExistence type="evidence at transcript level"/>
<dbReference type="EMBL" id="M65185">
    <property type="protein sequence ID" value="AAA29387.1"/>
    <property type="molecule type" value="mRNA"/>
</dbReference>
<dbReference type="PIR" id="B41681">
    <property type="entry name" value="B41681"/>
</dbReference>
<dbReference type="SMR" id="P27010"/>
<dbReference type="GO" id="GO:0004364">
    <property type="term" value="F:glutathione transferase activity"/>
    <property type="evidence" value="ECO:0007669"/>
    <property type="project" value="TreeGrafter"/>
</dbReference>
<dbReference type="GO" id="GO:0005212">
    <property type="term" value="F:structural constituent of eye lens"/>
    <property type="evidence" value="ECO:0007669"/>
    <property type="project" value="UniProtKB-KW"/>
</dbReference>
<dbReference type="GO" id="GO:0006749">
    <property type="term" value="P:glutathione metabolic process"/>
    <property type="evidence" value="ECO:0007669"/>
    <property type="project" value="TreeGrafter"/>
</dbReference>
<dbReference type="CDD" id="cd03192">
    <property type="entry name" value="GST_C_Sigma_like"/>
    <property type="match status" value="1"/>
</dbReference>
<dbReference type="CDD" id="cd03039">
    <property type="entry name" value="GST_N_Sigma_like"/>
    <property type="match status" value="1"/>
</dbReference>
<dbReference type="FunFam" id="3.40.30.10:FF:000035">
    <property type="entry name" value="hematopoietic prostaglandin D synthase"/>
    <property type="match status" value="1"/>
</dbReference>
<dbReference type="Gene3D" id="1.20.1050.10">
    <property type="match status" value="1"/>
</dbReference>
<dbReference type="Gene3D" id="3.40.30.10">
    <property type="entry name" value="Glutaredoxin"/>
    <property type="match status" value="1"/>
</dbReference>
<dbReference type="InterPro" id="IPR010987">
    <property type="entry name" value="Glutathione-S-Trfase_C-like"/>
</dbReference>
<dbReference type="InterPro" id="IPR036282">
    <property type="entry name" value="Glutathione-S-Trfase_C_sf"/>
</dbReference>
<dbReference type="InterPro" id="IPR040079">
    <property type="entry name" value="Glutathione_S-Trfase"/>
</dbReference>
<dbReference type="InterPro" id="IPR004045">
    <property type="entry name" value="Glutathione_S-Trfase_N"/>
</dbReference>
<dbReference type="InterPro" id="IPR004046">
    <property type="entry name" value="GST_C"/>
</dbReference>
<dbReference type="InterPro" id="IPR050213">
    <property type="entry name" value="GST_superfamily"/>
</dbReference>
<dbReference type="InterPro" id="IPR003083">
    <property type="entry name" value="S-crystallin"/>
</dbReference>
<dbReference type="InterPro" id="IPR036249">
    <property type="entry name" value="Thioredoxin-like_sf"/>
</dbReference>
<dbReference type="PANTHER" id="PTHR11571">
    <property type="entry name" value="GLUTATHIONE S-TRANSFERASE"/>
    <property type="match status" value="1"/>
</dbReference>
<dbReference type="PANTHER" id="PTHR11571:SF150">
    <property type="entry name" value="GLUTATHIONE S-TRANSFERASE"/>
    <property type="match status" value="1"/>
</dbReference>
<dbReference type="Pfam" id="PF14497">
    <property type="entry name" value="GST_C_3"/>
    <property type="match status" value="1"/>
</dbReference>
<dbReference type="Pfam" id="PF02798">
    <property type="entry name" value="GST_N"/>
    <property type="match status" value="1"/>
</dbReference>
<dbReference type="PRINTS" id="PR01269">
    <property type="entry name" value="SCRYSTALLIN"/>
</dbReference>
<dbReference type="SFLD" id="SFLDG01205">
    <property type="entry name" value="AMPS.1"/>
    <property type="match status" value="1"/>
</dbReference>
<dbReference type="SFLD" id="SFLDS00019">
    <property type="entry name" value="Glutathione_Transferase_(cytos"/>
    <property type="match status" value="1"/>
</dbReference>
<dbReference type="SUPFAM" id="SSF47616">
    <property type="entry name" value="GST C-terminal domain-like"/>
    <property type="match status" value="1"/>
</dbReference>
<dbReference type="SUPFAM" id="SSF52833">
    <property type="entry name" value="Thioredoxin-like"/>
    <property type="match status" value="1"/>
</dbReference>
<dbReference type="PROSITE" id="PS50405">
    <property type="entry name" value="GST_CTER"/>
    <property type="match status" value="1"/>
</dbReference>
<dbReference type="PROSITE" id="PS50404">
    <property type="entry name" value="GST_NTER"/>
    <property type="match status" value="1"/>
</dbReference>
<keyword id="KW-0273">Eye lens protein</keyword>
<comment type="function">
    <text>S-crystallins are structural components of squids and octopi eye lens. Contains relatively little if any GST activity.</text>
</comment>
<comment type="tissue specificity">
    <text>Lens.</text>
</comment>
<comment type="similarity">
    <text evidence="1">Belongs to the GST superfamily.</text>
</comment>
<evidence type="ECO:0000305" key="1"/>
<reference key="1">
    <citation type="journal article" date="1991" name="J. Biol. Chem.">
        <title>Crystallins of the octopus lens. Recruitment from detoxification enzymes.</title>
        <authorList>
            <person name="Tomarev S.I."/>
            <person name="Zinovieva R.D."/>
            <person name="Piatigorsky J."/>
        </authorList>
    </citation>
    <scope>NUCLEOTIDE SEQUENCE [MRNA]</scope>
    <source>
        <tissue>Lens</tissue>
    </source>
</reference>
<sequence>MPSYTLNYFNHRGRAEICRMLFAAAGVQYNDRRIETSEWSNMRSKMPCSMMPMLDIDNRHQIPQTMAIARYLAREFGFHGKNNMEMARVEYISDCFYDILDDYLRMYQDDNCRMMFQRSGDRNGSSEKRTRYQETLRRILPFMERTLEMYKSGGQFFMGDQMTMADMMCYCALENPIMEESSLLNSYPKLQALRTRVMSHLKMSPYLKKRSSTEF</sequence>
<feature type="chain" id="PRO_0000185993" description="S-crystallin 2">
    <location>
        <begin position="1"/>
        <end position="215"/>
    </location>
</feature>
<feature type="domain" description="GST N-terminal">
    <location>
        <begin position="2"/>
        <end position="80"/>
    </location>
</feature>
<feature type="domain" description="GST C-terminal">
    <location>
        <begin position="82"/>
        <end position="215"/>
    </location>
</feature>
<name>SCRY2_ENTDO</name>
<organism>
    <name type="scientific">Enteroctopus dofleini</name>
    <name type="common">North Pacific giant octopus</name>
    <name type="synonym">Octopus dofleini</name>
    <dbReference type="NCBI Taxonomy" id="267067"/>
    <lineage>
        <taxon>Eukaryota</taxon>
        <taxon>Metazoa</taxon>
        <taxon>Spiralia</taxon>
        <taxon>Lophotrochozoa</taxon>
        <taxon>Mollusca</taxon>
        <taxon>Cephalopoda</taxon>
        <taxon>Coleoidea</taxon>
        <taxon>Octopodiformes</taxon>
        <taxon>Octopoda</taxon>
        <taxon>Incirrata</taxon>
        <taxon>Octopodidae</taxon>
        <taxon>Enteroctopus</taxon>
    </lineage>
</organism>